<sequence>MGMRMVFTVFLLVVLATTVVSFTSDRASDGRNAAANDKASDLAALAVRGCCHDIFCKHNNPDICG</sequence>
<protein>
    <recommendedName>
        <fullName>Conotoxin Bu19</fullName>
    </recommendedName>
</protein>
<evidence type="ECO:0000250" key="1"/>
<evidence type="ECO:0000250" key="2">
    <source>
        <dbReference type="UniProtKB" id="P56636"/>
    </source>
</evidence>
<evidence type="ECO:0000255" key="3"/>
<evidence type="ECO:0000305" key="4"/>
<evidence type="ECO:0000305" key="5">
    <source>
    </source>
</evidence>
<dbReference type="GO" id="GO:0005576">
    <property type="term" value="C:extracellular region"/>
    <property type="evidence" value="ECO:0007669"/>
    <property type="project" value="UniProtKB-SubCell"/>
</dbReference>
<dbReference type="GO" id="GO:0030550">
    <property type="term" value="F:acetylcholine receptor inhibitor activity"/>
    <property type="evidence" value="ECO:0007669"/>
    <property type="project" value="InterPro"/>
</dbReference>
<dbReference type="GO" id="GO:0099106">
    <property type="term" value="F:ion channel regulator activity"/>
    <property type="evidence" value="ECO:0007669"/>
    <property type="project" value="UniProtKB-KW"/>
</dbReference>
<dbReference type="GO" id="GO:0090729">
    <property type="term" value="F:toxin activity"/>
    <property type="evidence" value="ECO:0007669"/>
    <property type="project" value="UniProtKB-KW"/>
</dbReference>
<dbReference type="InterPro" id="IPR009958">
    <property type="entry name" value="Conotoxin_a-typ"/>
</dbReference>
<dbReference type="Pfam" id="PF07365">
    <property type="entry name" value="Toxin_8"/>
    <property type="match status" value="1"/>
</dbReference>
<name>CA119_CONBU</name>
<reference key="1">
    <citation type="journal article" date="2011" name="BMC Genomics">
        <title>Characterization of the Conus bullatus genome and its venom-duct transcriptome.</title>
        <authorList>
            <person name="Hu H."/>
            <person name="Bandyopadhyay P.K."/>
            <person name="Olivera B.M."/>
            <person name="Yandell M."/>
        </authorList>
    </citation>
    <scope>NUCLEOTIDE SEQUENCE [MRNA]</scope>
    <source>
        <tissue>Venom duct</tissue>
    </source>
</reference>
<comment type="subcellular location">
    <subcellularLocation>
        <location evidence="5">Secreted</location>
    </subcellularLocation>
</comment>
<comment type="tissue specificity">
    <text evidence="5">Expressed by the venom duct.</text>
</comment>
<comment type="domain">
    <text evidence="4">The cysteine framework is I (CC-C-C). Alpha4/7 pattern.</text>
</comment>
<comment type="similarity">
    <text evidence="4">Belongs to the conotoxin A superfamily.</text>
</comment>
<proteinExistence type="inferred from homology"/>
<accession>P0CY75</accession>
<keyword id="KW-0027">Amidation</keyword>
<keyword id="KW-1015">Disulfide bond</keyword>
<keyword id="KW-0872">Ion channel impairing toxin</keyword>
<keyword id="KW-0528">Neurotoxin</keyword>
<keyword id="KW-0964">Secreted</keyword>
<keyword id="KW-0732">Signal</keyword>
<keyword id="KW-0800">Toxin</keyword>
<organism>
    <name type="scientific">Conus bullatus</name>
    <name type="common">Bubble cone</name>
    <dbReference type="NCBI Taxonomy" id="89438"/>
    <lineage>
        <taxon>Eukaryota</taxon>
        <taxon>Metazoa</taxon>
        <taxon>Spiralia</taxon>
        <taxon>Lophotrochozoa</taxon>
        <taxon>Mollusca</taxon>
        <taxon>Gastropoda</taxon>
        <taxon>Caenogastropoda</taxon>
        <taxon>Neogastropoda</taxon>
        <taxon>Conoidea</taxon>
        <taxon>Conidae</taxon>
        <taxon>Conus</taxon>
        <taxon>Textilia</taxon>
    </lineage>
</organism>
<feature type="signal peptide" evidence="3">
    <location>
        <begin position="1"/>
        <end position="21"/>
    </location>
</feature>
<feature type="propeptide" id="PRO_0000409965" evidence="1">
    <location>
        <begin position="22"/>
        <end position="48"/>
    </location>
</feature>
<feature type="peptide" id="PRO_0000409966" description="Conotoxin Bu19">
    <location>
        <begin position="49"/>
        <end position="64"/>
    </location>
</feature>
<feature type="modified residue" description="Cysteine amide" evidence="1">
    <location>
        <position position="64"/>
    </location>
</feature>
<feature type="disulfide bond" evidence="2">
    <location>
        <begin position="50"/>
        <end position="56"/>
    </location>
</feature>
<feature type="disulfide bond" evidence="2">
    <location>
        <begin position="51"/>
        <end position="64"/>
    </location>
</feature>